<name>RL36_NITHX</name>
<reference key="1">
    <citation type="submission" date="2006-03" db="EMBL/GenBank/DDBJ databases">
        <title>Complete sequence of chromosome of Nitrobacter hamburgensis X14.</title>
        <authorList>
            <consortium name="US DOE Joint Genome Institute"/>
            <person name="Copeland A."/>
            <person name="Lucas S."/>
            <person name="Lapidus A."/>
            <person name="Barry K."/>
            <person name="Detter J.C."/>
            <person name="Glavina del Rio T."/>
            <person name="Hammon N."/>
            <person name="Israni S."/>
            <person name="Dalin E."/>
            <person name="Tice H."/>
            <person name="Pitluck S."/>
            <person name="Chain P."/>
            <person name="Malfatti S."/>
            <person name="Shin M."/>
            <person name="Vergez L."/>
            <person name="Schmutz J."/>
            <person name="Larimer F."/>
            <person name="Land M."/>
            <person name="Hauser L."/>
            <person name="Kyrpides N."/>
            <person name="Ivanova N."/>
            <person name="Ward B."/>
            <person name="Arp D."/>
            <person name="Klotz M."/>
            <person name="Stein L."/>
            <person name="O'Mullan G."/>
            <person name="Starkenburg S."/>
            <person name="Sayavedra L."/>
            <person name="Poret-Peterson A.T."/>
            <person name="Gentry M.E."/>
            <person name="Bruce D."/>
            <person name="Richardson P."/>
        </authorList>
    </citation>
    <scope>NUCLEOTIDE SEQUENCE [LARGE SCALE GENOMIC DNA]</scope>
    <source>
        <strain>DSM 10229 / NCIMB 13809 / X14</strain>
    </source>
</reference>
<organism>
    <name type="scientific">Nitrobacter hamburgensis (strain DSM 10229 / NCIMB 13809 / X14)</name>
    <dbReference type="NCBI Taxonomy" id="323097"/>
    <lineage>
        <taxon>Bacteria</taxon>
        <taxon>Pseudomonadati</taxon>
        <taxon>Pseudomonadota</taxon>
        <taxon>Alphaproteobacteria</taxon>
        <taxon>Hyphomicrobiales</taxon>
        <taxon>Nitrobacteraceae</taxon>
        <taxon>Nitrobacter</taxon>
    </lineage>
</organism>
<comment type="similarity">
    <text evidence="1">Belongs to the bacterial ribosomal protein bL36 family.</text>
</comment>
<evidence type="ECO:0000255" key="1">
    <source>
        <dbReference type="HAMAP-Rule" id="MF_00251"/>
    </source>
</evidence>
<evidence type="ECO:0000305" key="2"/>
<accession>Q1QP05</accession>
<protein>
    <recommendedName>
        <fullName evidence="1">Large ribosomal subunit protein bL36</fullName>
    </recommendedName>
    <alternativeName>
        <fullName evidence="2">50S ribosomal protein L36</fullName>
    </alternativeName>
</protein>
<gene>
    <name evidence="1" type="primary">rpmJ</name>
    <name type="ordered locus">Nham_1214</name>
</gene>
<feature type="chain" id="PRO_0000302253" description="Large ribosomal subunit protein bL36">
    <location>
        <begin position="1"/>
        <end position="41"/>
    </location>
</feature>
<proteinExistence type="inferred from homology"/>
<dbReference type="EMBL" id="CP000319">
    <property type="protein sequence ID" value="ABE62042.1"/>
    <property type="molecule type" value="Genomic_DNA"/>
</dbReference>
<dbReference type="SMR" id="Q1QP05"/>
<dbReference type="STRING" id="323097.Nham_1214"/>
<dbReference type="KEGG" id="nha:Nham_1214"/>
<dbReference type="eggNOG" id="COG0257">
    <property type="taxonomic scope" value="Bacteria"/>
</dbReference>
<dbReference type="HOGENOM" id="CLU_135723_3_2_5"/>
<dbReference type="OrthoDB" id="9801558at2"/>
<dbReference type="Proteomes" id="UP000001953">
    <property type="component" value="Chromosome"/>
</dbReference>
<dbReference type="GO" id="GO:1990904">
    <property type="term" value="C:ribonucleoprotein complex"/>
    <property type="evidence" value="ECO:0007669"/>
    <property type="project" value="UniProtKB-KW"/>
</dbReference>
<dbReference type="GO" id="GO:0005840">
    <property type="term" value="C:ribosome"/>
    <property type="evidence" value="ECO:0007669"/>
    <property type="project" value="UniProtKB-KW"/>
</dbReference>
<dbReference type="GO" id="GO:0003735">
    <property type="term" value="F:structural constituent of ribosome"/>
    <property type="evidence" value="ECO:0007669"/>
    <property type="project" value="InterPro"/>
</dbReference>
<dbReference type="GO" id="GO:0006412">
    <property type="term" value="P:translation"/>
    <property type="evidence" value="ECO:0007669"/>
    <property type="project" value="UniProtKB-UniRule"/>
</dbReference>
<dbReference type="HAMAP" id="MF_00251">
    <property type="entry name" value="Ribosomal_bL36"/>
    <property type="match status" value="1"/>
</dbReference>
<dbReference type="InterPro" id="IPR000473">
    <property type="entry name" value="Ribosomal_bL36"/>
</dbReference>
<dbReference type="InterPro" id="IPR035977">
    <property type="entry name" value="Ribosomal_bL36_sp"/>
</dbReference>
<dbReference type="InterPro" id="IPR047621">
    <property type="entry name" value="Ribosomal_L36_bact"/>
</dbReference>
<dbReference type="NCBIfam" id="NF002021">
    <property type="entry name" value="PRK00831.1"/>
    <property type="match status" value="1"/>
</dbReference>
<dbReference type="NCBIfam" id="TIGR01022">
    <property type="entry name" value="rpmJ_bact"/>
    <property type="match status" value="1"/>
</dbReference>
<dbReference type="PANTHER" id="PTHR47781">
    <property type="entry name" value="50S RIBOSOMAL PROTEIN L36 2"/>
    <property type="match status" value="1"/>
</dbReference>
<dbReference type="PANTHER" id="PTHR47781:SF1">
    <property type="entry name" value="LARGE RIBOSOMAL SUBUNIT PROTEIN BL36B"/>
    <property type="match status" value="1"/>
</dbReference>
<dbReference type="Pfam" id="PF00444">
    <property type="entry name" value="Ribosomal_L36"/>
    <property type="match status" value="1"/>
</dbReference>
<dbReference type="SUPFAM" id="SSF57840">
    <property type="entry name" value="Ribosomal protein L36"/>
    <property type="match status" value="1"/>
</dbReference>
<dbReference type="PROSITE" id="PS00828">
    <property type="entry name" value="RIBOSOMAL_L36"/>
    <property type="match status" value="1"/>
</dbReference>
<sequence length="41" mass="5050">MKVRNSLKSLRARHRDNRLVRRKGRVYVINKTQRRFKARQG</sequence>
<keyword id="KW-1185">Reference proteome</keyword>
<keyword id="KW-0687">Ribonucleoprotein</keyword>
<keyword id="KW-0689">Ribosomal protein</keyword>